<sequence>MFFLLALLTELGRLQAHVGSEGIFLHVTVPRKILSNDSEVSERKMIYIITIDGQPYTLHLRKQSFLPQNFLVYTYNEAGSLHSESPYFMMHCHYQGYAAEFPNSFVTLSICSGLRGFLQFENVSYGIEPLESSARFEHIIYQMKNNDPNVSILAENYSHIWQKDQSYKVPLNSQKKNLSKLLPQYLEIYIIVEKALYDYMGSEMMAVTQKIVQVIGLVNTMFTQFRLTVTLSSLELWSNENQISTSGDADDILQRFLAWKRDYLILRPHDIAYLLVYRKHPKYVGATFPGTICNESYDAGIAMYPDAIDLEGFSVIIAQLLGLNVGLTYDDITQCFCLRATCIMNHEAMSARGIKIFSNCSMHDYRYFVSKFEAKCLQKLSNLQPLHQNQPVCGNGILESNEECDCGNKKECQFKKCCDYNTCKLKGSVKCGSGPCCTSKCELSIVGTPCRKSVDPECDFTEYCNGTSSDCVPDTYALNGHLCKLGTAYCYNGQCQTTDNQCAKIFGKGAQGAPFACFKEVNSLHETSENCGFKNSQPLPCERKDVLCGKLACVQPHKNAYKSDIQYTVYSYIQDHVCVSIATGSSMRSDGTDNAYVADGTMCGPEMYCVNKTCRKVHLTGYNCNTTTKCKGKGICNNFGNCQCFPGHKPPDCKFQFGSPGGSIDDGNFQKSDEFYTEKGYNAHWNNWFILSFYIVLPFFIIFTIVIFKRNEIRKLCNRENTELIHPLYQKAMMWNINIAQNFRSK</sequence>
<evidence type="ECO:0000250" key="1"/>
<evidence type="ECO:0000255" key="2"/>
<evidence type="ECO:0000255" key="3">
    <source>
        <dbReference type="PROSITE-ProRule" id="PRU00068"/>
    </source>
</evidence>
<evidence type="ECO:0000255" key="4">
    <source>
        <dbReference type="PROSITE-ProRule" id="PRU00076"/>
    </source>
</evidence>
<evidence type="ECO:0000255" key="5">
    <source>
        <dbReference type="PROSITE-ProRule" id="PRU00276"/>
    </source>
</evidence>
<accession>Q95194</accession>
<reference key="1">
    <citation type="journal article" date="1998" name="Mol. Hum. Reprod.">
        <title>Macaque MDC family of proteins: sequence analysis, tissue distribution and processing in the male reproductive tract.</title>
        <authorList>
            <person name="Frayne J."/>
            <person name="Jury J.A."/>
            <person name="Barker H.L."/>
            <person name="Perry A.C.F."/>
            <person name="Jones R."/>
            <person name="Hall L."/>
        </authorList>
    </citation>
    <scope>NUCLEOTIDE SEQUENCE [MRNA]</scope>
    <source>
        <tissue>Testis</tissue>
    </source>
</reference>
<keyword id="KW-0217">Developmental protein</keyword>
<keyword id="KW-0221">Differentiation</keyword>
<keyword id="KW-1015">Disulfide bond</keyword>
<keyword id="KW-0245">EGF-like domain</keyword>
<keyword id="KW-0325">Glycoprotein</keyword>
<keyword id="KW-0472">Membrane</keyword>
<keyword id="KW-1185">Reference proteome</keyword>
<keyword id="KW-0732">Signal</keyword>
<keyword id="KW-0744">Spermatogenesis</keyword>
<keyword id="KW-0812">Transmembrane</keyword>
<keyword id="KW-1133">Transmembrane helix</keyword>
<dbReference type="EMBL" id="Y08617">
    <property type="protein sequence ID" value="CAA69909.1"/>
    <property type="molecule type" value="mRNA"/>
</dbReference>
<dbReference type="SMR" id="Q95194"/>
<dbReference type="MEROPS" id="M12.957"/>
<dbReference type="GlyCosmos" id="Q95194">
    <property type="glycosylation" value="10 sites, No reported glycans"/>
</dbReference>
<dbReference type="eggNOG" id="KOG3607">
    <property type="taxonomic scope" value="Eukaryota"/>
</dbReference>
<dbReference type="Proteomes" id="UP000233100">
    <property type="component" value="Unplaced"/>
</dbReference>
<dbReference type="GO" id="GO:0005886">
    <property type="term" value="C:plasma membrane"/>
    <property type="evidence" value="ECO:0007669"/>
    <property type="project" value="TreeGrafter"/>
</dbReference>
<dbReference type="GO" id="GO:0004222">
    <property type="term" value="F:metalloendopeptidase activity"/>
    <property type="evidence" value="ECO:0007669"/>
    <property type="project" value="InterPro"/>
</dbReference>
<dbReference type="GO" id="GO:0007339">
    <property type="term" value="P:binding of sperm to zona pellucida"/>
    <property type="evidence" value="ECO:0007669"/>
    <property type="project" value="TreeGrafter"/>
</dbReference>
<dbReference type="GO" id="GO:0007155">
    <property type="term" value="P:cell adhesion"/>
    <property type="evidence" value="ECO:0007669"/>
    <property type="project" value="TreeGrafter"/>
</dbReference>
<dbReference type="GO" id="GO:0030154">
    <property type="term" value="P:cell differentiation"/>
    <property type="evidence" value="ECO:0007669"/>
    <property type="project" value="UniProtKB-KW"/>
</dbReference>
<dbReference type="GO" id="GO:0008584">
    <property type="term" value="P:male gonad development"/>
    <property type="evidence" value="ECO:0007669"/>
    <property type="project" value="TreeGrafter"/>
</dbReference>
<dbReference type="GO" id="GO:0006508">
    <property type="term" value="P:proteolysis"/>
    <property type="evidence" value="ECO:0007669"/>
    <property type="project" value="InterPro"/>
</dbReference>
<dbReference type="GO" id="GO:0007283">
    <property type="term" value="P:spermatogenesis"/>
    <property type="evidence" value="ECO:0007669"/>
    <property type="project" value="UniProtKB-KW"/>
</dbReference>
<dbReference type="CDD" id="cd04269">
    <property type="entry name" value="ZnMc_adamalysin_II_like"/>
    <property type="match status" value="1"/>
</dbReference>
<dbReference type="FunFam" id="3.40.390.10:FF:000033">
    <property type="entry name" value="A disintegrin and metallopeptidase domain 18"/>
    <property type="match status" value="1"/>
</dbReference>
<dbReference type="FunFam" id="4.10.70.10:FF:000001">
    <property type="entry name" value="Disintegrin and metalloproteinase domain-containing protein 22"/>
    <property type="match status" value="1"/>
</dbReference>
<dbReference type="Gene3D" id="3.40.390.10">
    <property type="entry name" value="Collagenase (Catalytic Domain)"/>
    <property type="match status" value="1"/>
</dbReference>
<dbReference type="Gene3D" id="4.10.70.10">
    <property type="entry name" value="Disintegrin domain"/>
    <property type="match status" value="1"/>
</dbReference>
<dbReference type="InterPro" id="IPR006586">
    <property type="entry name" value="ADAM_Cys-rich"/>
</dbReference>
<dbReference type="InterPro" id="IPR018358">
    <property type="entry name" value="Disintegrin_CS"/>
</dbReference>
<dbReference type="InterPro" id="IPR001762">
    <property type="entry name" value="Disintegrin_dom"/>
</dbReference>
<dbReference type="InterPro" id="IPR036436">
    <property type="entry name" value="Disintegrin_dom_sf"/>
</dbReference>
<dbReference type="InterPro" id="IPR000742">
    <property type="entry name" value="EGF-like_dom"/>
</dbReference>
<dbReference type="InterPro" id="IPR024079">
    <property type="entry name" value="MetalloPept_cat_dom_sf"/>
</dbReference>
<dbReference type="InterPro" id="IPR001590">
    <property type="entry name" value="Peptidase_M12B"/>
</dbReference>
<dbReference type="InterPro" id="IPR002870">
    <property type="entry name" value="Peptidase_M12B_N"/>
</dbReference>
<dbReference type="InterPro" id="IPR034027">
    <property type="entry name" value="Reprolysin_adamalysin"/>
</dbReference>
<dbReference type="PANTHER" id="PTHR11905">
    <property type="entry name" value="ADAM A DISINTEGRIN AND METALLOPROTEASE DOMAIN"/>
    <property type="match status" value="1"/>
</dbReference>
<dbReference type="PANTHER" id="PTHR11905:SF158">
    <property type="entry name" value="DISINTEGRIN AND METALLOPROTEINASE DOMAIN-CONTAINING PROTEIN 18"/>
    <property type="match status" value="1"/>
</dbReference>
<dbReference type="Pfam" id="PF08516">
    <property type="entry name" value="ADAM_CR"/>
    <property type="match status" value="1"/>
</dbReference>
<dbReference type="Pfam" id="PF00200">
    <property type="entry name" value="Disintegrin"/>
    <property type="match status" value="1"/>
</dbReference>
<dbReference type="Pfam" id="PF01562">
    <property type="entry name" value="Pep_M12B_propep"/>
    <property type="match status" value="1"/>
</dbReference>
<dbReference type="Pfam" id="PF01421">
    <property type="entry name" value="Reprolysin"/>
    <property type="match status" value="1"/>
</dbReference>
<dbReference type="SMART" id="SM00608">
    <property type="entry name" value="ACR"/>
    <property type="match status" value="1"/>
</dbReference>
<dbReference type="SMART" id="SM00050">
    <property type="entry name" value="DISIN"/>
    <property type="match status" value="1"/>
</dbReference>
<dbReference type="SUPFAM" id="SSF57552">
    <property type="entry name" value="Blood coagulation inhibitor (disintegrin)"/>
    <property type="match status" value="1"/>
</dbReference>
<dbReference type="SUPFAM" id="SSF55486">
    <property type="entry name" value="Metalloproteases ('zincins'), catalytic domain"/>
    <property type="match status" value="1"/>
</dbReference>
<dbReference type="PROSITE" id="PS50215">
    <property type="entry name" value="ADAM_MEPRO"/>
    <property type="match status" value="1"/>
</dbReference>
<dbReference type="PROSITE" id="PS00427">
    <property type="entry name" value="DISINTEGRIN_1"/>
    <property type="match status" value="1"/>
</dbReference>
<dbReference type="PROSITE" id="PS50214">
    <property type="entry name" value="DISINTEGRIN_2"/>
    <property type="match status" value="1"/>
</dbReference>
<dbReference type="PROSITE" id="PS50026">
    <property type="entry name" value="EGF_3"/>
    <property type="match status" value="1"/>
</dbReference>
<comment type="function">
    <text evidence="1">Sperm surface membrane protein that may be involved in spermatogenesis and fertilization. This is a non catalytic metalloprotease-like protein (By similarity).</text>
</comment>
<comment type="subcellular location">
    <subcellularLocation>
        <location>Membrane</location>
        <topology>Single-pass type I membrane protein</topology>
    </subcellularLocation>
</comment>
<comment type="tissue specificity">
    <text>Expressed predominantly in adult and prepubertal testis.</text>
</comment>
<comment type="domain">
    <text evidence="1">A tripeptide motif (ECD) within disintegrin-like domain could be involved in the binding to egg integrin receptor and thus could mediate sperm/egg binding.</text>
</comment>
<comment type="PTM">
    <text>The prodomain and the metalloprotease-like domain are cleaved during the epididymal maturation of the spermatozoa.</text>
</comment>
<name>ADA18_MACFA</name>
<gene>
    <name type="primary">ADAM18</name>
    <name type="synonym">TMDC3</name>
</gene>
<feature type="signal peptide" evidence="2">
    <location>
        <begin position="1"/>
        <end position="16"/>
    </location>
</feature>
<feature type="propeptide" id="PRO_0000029098" evidence="2">
    <location>
        <begin position="17"/>
        <end position="183"/>
    </location>
</feature>
<feature type="chain" id="PRO_0000029099" description="Disintegrin and metalloproteinase domain-containing protein 18">
    <location>
        <begin position="184"/>
        <end position="746"/>
    </location>
</feature>
<feature type="topological domain" description="Extracellular" evidence="2">
    <location>
        <begin position="177"/>
        <end position="687"/>
    </location>
</feature>
<feature type="transmembrane region" description="Helical" evidence="2">
    <location>
        <begin position="688"/>
        <end position="708"/>
    </location>
</feature>
<feature type="topological domain" description="Cytoplasmic" evidence="2">
    <location>
        <begin position="709"/>
        <end position="746"/>
    </location>
</feature>
<feature type="domain" description="Peptidase M12B" evidence="5">
    <location>
        <begin position="184"/>
        <end position="381"/>
    </location>
</feature>
<feature type="domain" description="Disintegrin" evidence="3">
    <location>
        <begin position="390"/>
        <end position="479"/>
    </location>
</feature>
<feature type="domain" description="EGF-like" evidence="4">
    <location>
        <begin position="620"/>
        <end position="654"/>
    </location>
</feature>
<feature type="glycosylation site" description="N-linked (GlcNAc...) asparagine" evidence="2">
    <location>
        <position position="36"/>
    </location>
</feature>
<feature type="glycosylation site" description="N-linked (GlcNAc...) asparagine" evidence="2">
    <location>
        <position position="122"/>
    </location>
</feature>
<feature type="glycosylation site" description="N-linked (GlcNAc...) asparagine" evidence="2">
    <location>
        <position position="149"/>
    </location>
</feature>
<feature type="glycosylation site" description="N-linked (GlcNAc...) asparagine" evidence="2">
    <location>
        <position position="156"/>
    </location>
</feature>
<feature type="glycosylation site" description="N-linked (GlcNAc...) asparagine" evidence="2">
    <location>
        <position position="177"/>
    </location>
</feature>
<feature type="glycosylation site" description="N-linked (GlcNAc...) asparagine" evidence="2">
    <location>
        <position position="294"/>
    </location>
</feature>
<feature type="glycosylation site" description="N-linked (GlcNAc...) asparagine" evidence="2">
    <location>
        <position position="359"/>
    </location>
</feature>
<feature type="glycosylation site" description="N-linked (GlcNAc...) asparagine" evidence="2">
    <location>
        <position position="465"/>
    </location>
</feature>
<feature type="glycosylation site" description="N-linked (GlcNAc...) asparagine" evidence="2">
    <location>
        <position position="611"/>
    </location>
</feature>
<feature type="glycosylation site" description="N-linked (GlcNAc...) asparagine" evidence="2">
    <location>
        <position position="625"/>
    </location>
</feature>
<feature type="disulfide bond" evidence="1">
    <location>
        <begin position="293"/>
        <end position="376"/>
    </location>
</feature>
<feature type="disulfide bond" evidence="1">
    <location>
        <begin position="335"/>
        <end position="360"/>
    </location>
</feature>
<feature type="disulfide bond" evidence="1">
    <location>
        <begin position="337"/>
        <end position="342"/>
    </location>
</feature>
<feature type="disulfide bond" evidence="1">
    <location>
        <begin position="450"/>
        <end position="471"/>
    </location>
</feature>
<feature type="disulfide bond" evidence="1">
    <location>
        <begin position="624"/>
        <end position="636"/>
    </location>
</feature>
<feature type="disulfide bond" evidence="1">
    <location>
        <begin position="630"/>
        <end position="642"/>
    </location>
</feature>
<feature type="disulfide bond" evidence="1">
    <location>
        <begin position="644"/>
        <end position="653"/>
    </location>
</feature>
<protein>
    <recommendedName>
        <fullName>Disintegrin and metalloproteinase domain-containing protein 18</fullName>
        <shortName>ADAM 18</shortName>
    </recommendedName>
    <alternativeName>
        <fullName>Transmembrane metalloproteinase-like, disintegrin-like, and cysteine-rich protein III</fullName>
        <shortName>tMDC III</shortName>
    </alternativeName>
</protein>
<organism>
    <name type="scientific">Macaca fascicularis</name>
    <name type="common">Crab-eating macaque</name>
    <name type="synonym">Cynomolgus monkey</name>
    <dbReference type="NCBI Taxonomy" id="9541"/>
    <lineage>
        <taxon>Eukaryota</taxon>
        <taxon>Metazoa</taxon>
        <taxon>Chordata</taxon>
        <taxon>Craniata</taxon>
        <taxon>Vertebrata</taxon>
        <taxon>Euteleostomi</taxon>
        <taxon>Mammalia</taxon>
        <taxon>Eutheria</taxon>
        <taxon>Euarchontoglires</taxon>
        <taxon>Primates</taxon>
        <taxon>Haplorrhini</taxon>
        <taxon>Catarrhini</taxon>
        <taxon>Cercopithecidae</taxon>
        <taxon>Cercopithecinae</taxon>
        <taxon>Macaca</taxon>
    </lineage>
</organism>
<proteinExistence type="evidence at transcript level"/>